<keyword id="KW-0030">Aminoacyl-tRNA synthetase</keyword>
<keyword id="KW-0067">ATP-binding</keyword>
<keyword id="KW-0963">Cytoplasm</keyword>
<keyword id="KW-0436">Ligase</keyword>
<keyword id="KW-0479">Metal-binding</keyword>
<keyword id="KW-0547">Nucleotide-binding</keyword>
<keyword id="KW-0648">Protein biosynthesis</keyword>
<keyword id="KW-1185">Reference proteome</keyword>
<keyword id="KW-0862">Zinc</keyword>
<accession>A7HDA1</accession>
<comment type="catalytic activity">
    <reaction evidence="1">
        <text>tRNA(Cys) + L-cysteine + ATP = L-cysteinyl-tRNA(Cys) + AMP + diphosphate</text>
        <dbReference type="Rhea" id="RHEA:17773"/>
        <dbReference type="Rhea" id="RHEA-COMP:9661"/>
        <dbReference type="Rhea" id="RHEA-COMP:9679"/>
        <dbReference type="ChEBI" id="CHEBI:30616"/>
        <dbReference type="ChEBI" id="CHEBI:33019"/>
        <dbReference type="ChEBI" id="CHEBI:35235"/>
        <dbReference type="ChEBI" id="CHEBI:78442"/>
        <dbReference type="ChEBI" id="CHEBI:78517"/>
        <dbReference type="ChEBI" id="CHEBI:456215"/>
        <dbReference type="EC" id="6.1.1.16"/>
    </reaction>
</comment>
<comment type="cofactor">
    <cofactor evidence="1">
        <name>Zn(2+)</name>
        <dbReference type="ChEBI" id="CHEBI:29105"/>
    </cofactor>
    <text evidence="1">Binds 1 zinc ion per subunit.</text>
</comment>
<comment type="subunit">
    <text evidence="1">Monomer.</text>
</comment>
<comment type="subcellular location">
    <subcellularLocation>
        <location evidence="1">Cytoplasm</location>
    </subcellularLocation>
</comment>
<comment type="similarity">
    <text evidence="1">Belongs to the class-I aminoacyl-tRNA synthetase family.</text>
</comment>
<dbReference type="EC" id="6.1.1.16" evidence="1"/>
<dbReference type="EMBL" id="CP000769">
    <property type="protein sequence ID" value="ABS26697.1"/>
    <property type="molecule type" value="Genomic_DNA"/>
</dbReference>
<dbReference type="RefSeq" id="WP_012097289.1">
    <property type="nucleotide sequence ID" value="NC_009675.1"/>
</dbReference>
<dbReference type="SMR" id="A7HDA1"/>
<dbReference type="STRING" id="404589.Anae109_2496"/>
<dbReference type="KEGG" id="afw:Anae109_2496"/>
<dbReference type="eggNOG" id="COG0215">
    <property type="taxonomic scope" value="Bacteria"/>
</dbReference>
<dbReference type="HOGENOM" id="CLU_013528_0_1_7"/>
<dbReference type="OrthoDB" id="9815130at2"/>
<dbReference type="Proteomes" id="UP000006382">
    <property type="component" value="Chromosome"/>
</dbReference>
<dbReference type="GO" id="GO:0005829">
    <property type="term" value="C:cytosol"/>
    <property type="evidence" value="ECO:0007669"/>
    <property type="project" value="TreeGrafter"/>
</dbReference>
<dbReference type="GO" id="GO:0005524">
    <property type="term" value="F:ATP binding"/>
    <property type="evidence" value="ECO:0007669"/>
    <property type="project" value="UniProtKB-UniRule"/>
</dbReference>
<dbReference type="GO" id="GO:0004817">
    <property type="term" value="F:cysteine-tRNA ligase activity"/>
    <property type="evidence" value="ECO:0007669"/>
    <property type="project" value="UniProtKB-UniRule"/>
</dbReference>
<dbReference type="GO" id="GO:0008270">
    <property type="term" value="F:zinc ion binding"/>
    <property type="evidence" value="ECO:0007669"/>
    <property type="project" value="UniProtKB-UniRule"/>
</dbReference>
<dbReference type="GO" id="GO:0006423">
    <property type="term" value="P:cysteinyl-tRNA aminoacylation"/>
    <property type="evidence" value="ECO:0007669"/>
    <property type="project" value="UniProtKB-UniRule"/>
</dbReference>
<dbReference type="CDD" id="cd00672">
    <property type="entry name" value="CysRS_core"/>
    <property type="match status" value="1"/>
</dbReference>
<dbReference type="FunFam" id="3.40.50.620:FF:000009">
    <property type="entry name" value="Cysteine--tRNA ligase"/>
    <property type="match status" value="1"/>
</dbReference>
<dbReference type="Gene3D" id="1.20.120.1910">
    <property type="entry name" value="Cysteine-tRNA ligase, C-terminal anti-codon recognition domain"/>
    <property type="match status" value="1"/>
</dbReference>
<dbReference type="Gene3D" id="3.40.50.620">
    <property type="entry name" value="HUPs"/>
    <property type="match status" value="1"/>
</dbReference>
<dbReference type="HAMAP" id="MF_00041">
    <property type="entry name" value="Cys_tRNA_synth"/>
    <property type="match status" value="1"/>
</dbReference>
<dbReference type="InterPro" id="IPR015803">
    <property type="entry name" value="Cys-tRNA-ligase"/>
</dbReference>
<dbReference type="InterPro" id="IPR015273">
    <property type="entry name" value="Cys-tRNA-synt_Ia_DALR"/>
</dbReference>
<dbReference type="InterPro" id="IPR024909">
    <property type="entry name" value="Cys-tRNA/MSH_ligase"/>
</dbReference>
<dbReference type="InterPro" id="IPR014729">
    <property type="entry name" value="Rossmann-like_a/b/a_fold"/>
</dbReference>
<dbReference type="InterPro" id="IPR032678">
    <property type="entry name" value="tRNA-synt_1_cat_dom"/>
</dbReference>
<dbReference type="InterPro" id="IPR009080">
    <property type="entry name" value="tRNAsynth_Ia_anticodon-bd"/>
</dbReference>
<dbReference type="NCBIfam" id="TIGR00435">
    <property type="entry name" value="cysS"/>
    <property type="match status" value="1"/>
</dbReference>
<dbReference type="PANTHER" id="PTHR10890:SF3">
    <property type="entry name" value="CYSTEINE--TRNA LIGASE, CYTOPLASMIC"/>
    <property type="match status" value="1"/>
</dbReference>
<dbReference type="PANTHER" id="PTHR10890">
    <property type="entry name" value="CYSTEINYL-TRNA SYNTHETASE"/>
    <property type="match status" value="1"/>
</dbReference>
<dbReference type="Pfam" id="PF09190">
    <property type="entry name" value="DALR_2"/>
    <property type="match status" value="1"/>
</dbReference>
<dbReference type="Pfam" id="PF01406">
    <property type="entry name" value="tRNA-synt_1e"/>
    <property type="match status" value="1"/>
</dbReference>
<dbReference type="PRINTS" id="PR00983">
    <property type="entry name" value="TRNASYNTHCYS"/>
</dbReference>
<dbReference type="SMART" id="SM00840">
    <property type="entry name" value="DALR_2"/>
    <property type="match status" value="1"/>
</dbReference>
<dbReference type="SUPFAM" id="SSF47323">
    <property type="entry name" value="Anticodon-binding domain of a subclass of class I aminoacyl-tRNA synthetases"/>
    <property type="match status" value="1"/>
</dbReference>
<dbReference type="SUPFAM" id="SSF52374">
    <property type="entry name" value="Nucleotidylyl transferase"/>
    <property type="match status" value="1"/>
</dbReference>
<gene>
    <name evidence="1" type="primary">cysS</name>
    <name type="ordered locus">Anae109_2496</name>
</gene>
<organism>
    <name type="scientific">Anaeromyxobacter sp. (strain Fw109-5)</name>
    <dbReference type="NCBI Taxonomy" id="404589"/>
    <lineage>
        <taxon>Bacteria</taxon>
        <taxon>Pseudomonadati</taxon>
        <taxon>Myxococcota</taxon>
        <taxon>Myxococcia</taxon>
        <taxon>Myxococcales</taxon>
        <taxon>Cystobacterineae</taxon>
        <taxon>Anaeromyxobacteraceae</taxon>
        <taxon>Anaeromyxobacter</taxon>
    </lineage>
</organism>
<reference key="1">
    <citation type="journal article" date="2015" name="Genome Announc.">
        <title>Complete genome sequence of Anaeromyxobacter sp. Fw109-5, an anaerobic, metal-reducing bacterium isolated from a contaminated subsurface environment.</title>
        <authorList>
            <person name="Hwang C."/>
            <person name="Copeland A."/>
            <person name="Lucas S."/>
            <person name="Lapidus A."/>
            <person name="Barry K."/>
            <person name="Glavina Del Rio T."/>
            <person name="Dalin E."/>
            <person name="Tice H."/>
            <person name="Pitluck S."/>
            <person name="Sims D."/>
            <person name="Brettin T."/>
            <person name="Bruce D.C."/>
            <person name="Detter J.C."/>
            <person name="Han C.S."/>
            <person name="Schmutz J."/>
            <person name="Larimer F.W."/>
            <person name="Land M.L."/>
            <person name="Hauser L.J."/>
            <person name="Kyrpides N."/>
            <person name="Lykidis A."/>
            <person name="Richardson P."/>
            <person name="Belieav A."/>
            <person name="Sanford R.A."/>
            <person name="Loeffler F.E."/>
            <person name="Fields M.W."/>
        </authorList>
    </citation>
    <scope>NUCLEOTIDE SEQUENCE [LARGE SCALE GENOMIC DNA]</scope>
    <source>
        <strain>Fw109-5</strain>
    </source>
</reference>
<protein>
    <recommendedName>
        <fullName evidence="1">Cysteine--tRNA ligase</fullName>
        <ecNumber evidence="1">6.1.1.16</ecNumber>
    </recommendedName>
    <alternativeName>
        <fullName evidence="1">Cysteinyl-tRNA synthetase</fullName>
        <shortName evidence="1">CysRS</shortName>
    </alternativeName>
</protein>
<feature type="chain" id="PRO_1000071068" description="Cysteine--tRNA ligase">
    <location>
        <begin position="1"/>
        <end position="482"/>
    </location>
</feature>
<feature type="short sequence motif" description="'HIGH' region">
    <location>
        <begin position="31"/>
        <end position="41"/>
    </location>
</feature>
<feature type="short sequence motif" description="'KMSKS' region">
    <location>
        <begin position="272"/>
        <end position="276"/>
    </location>
</feature>
<feature type="binding site" evidence="1">
    <location>
        <position position="29"/>
    </location>
    <ligand>
        <name>Zn(2+)</name>
        <dbReference type="ChEBI" id="CHEBI:29105"/>
    </ligand>
</feature>
<feature type="binding site" evidence="1">
    <location>
        <position position="210"/>
    </location>
    <ligand>
        <name>Zn(2+)</name>
        <dbReference type="ChEBI" id="CHEBI:29105"/>
    </ligand>
</feature>
<feature type="binding site" evidence="1">
    <location>
        <position position="235"/>
    </location>
    <ligand>
        <name>Zn(2+)</name>
        <dbReference type="ChEBI" id="CHEBI:29105"/>
    </ligand>
</feature>
<feature type="binding site" evidence="1">
    <location>
        <position position="239"/>
    </location>
    <ligand>
        <name>Zn(2+)</name>
        <dbReference type="ChEBI" id="CHEBI:29105"/>
    </ligand>
</feature>
<feature type="binding site" evidence="1">
    <location>
        <position position="275"/>
    </location>
    <ligand>
        <name>ATP</name>
        <dbReference type="ChEBI" id="CHEBI:30616"/>
    </ligand>
</feature>
<evidence type="ECO:0000255" key="1">
    <source>
        <dbReference type="HAMAP-Rule" id="MF_00041"/>
    </source>
</evidence>
<sequence length="482" mass="53232">MPIVISDTLTGTKRELQPIEPGKIRFYACGPTVYDSAHVGHGRSYVVWDLVVRHLRARGYEVRYVRNFTDVDDKIIRRATERREDPVALAARYAREFDEDMDALGNLRPDVAPKVSEHVPQIVAMISSLVEKGFAYAAANGDVYFSVRAFPDYGRLSKRNLDDLLSGARVEPGEAKRDPLDFALWKAAKPGEPTWDSPWGGGRPGWHIECSAMTLAHLGVPIDLHGGGKDLVFPHHTNEIAQSAAAVGDGRTAESFCRHWMHHGFVEIDSEKMSKSLGNFFTLRDVLAKFDAEGVRLFYLGTHYRNPINYSDAILAEAERRLNYFYETLEKVDALAEGTSPAGEGGGVVEDARRALDDDFNAPQVLAVLAEAFTAANALADKRGKKTPEDRARLAAFARDVREIGTTLGLVQRRPAEALRAIRARAAARRGIDPASVEAKIVERAEARRARDFARSDAIRDALLAQGVALMDGPQGTTWKVE</sequence>
<name>SYC_ANADF</name>
<proteinExistence type="inferred from homology"/>